<protein>
    <recommendedName>
        <fullName evidence="1">Chorismate synthase</fullName>
        <shortName evidence="1">CS</shortName>
        <ecNumber evidence="1">4.2.3.5</ecNumber>
    </recommendedName>
    <alternativeName>
        <fullName evidence="1">5-enolpyruvylshikimate-3-phosphate phospholyase</fullName>
    </alternativeName>
</protein>
<proteinExistence type="inferred from homology"/>
<feature type="chain" id="PRO_0000256362" description="Chorismate synthase">
    <location>
        <begin position="1"/>
        <end position="367"/>
    </location>
</feature>
<feature type="region of interest" description="Disordered" evidence="2">
    <location>
        <begin position="39"/>
        <end position="60"/>
    </location>
</feature>
<feature type="binding site" evidence="1">
    <location>
        <position position="48"/>
    </location>
    <ligand>
        <name>NADP(+)</name>
        <dbReference type="ChEBI" id="CHEBI:58349"/>
    </ligand>
</feature>
<feature type="binding site" evidence="1">
    <location>
        <position position="54"/>
    </location>
    <ligand>
        <name>NADP(+)</name>
        <dbReference type="ChEBI" id="CHEBI:58349"/>
    </ligand>
</feature>
<feature type="binding site" evidence="1">
    <location>
        <begin position="125"/>
        <end position="127"/>
    </location>
    <ligand>
        <name>FMN</name>
        <dbReference type="ChEBI" id="CHEBI:58210"/>
    </ligand>
</feature>
<feature type="binding site" evidence="1">
    <location>
        <begin position="238"/>
        <end position="239"/>
    </location>
    <ligand>
        <name>FMN</name>
        <dbReference type="ChEBI" id="CHEBI:58210"/>
    </ligand>
</feature>
<feature type="binding site" evidence="1">
    <location>
        <position position="278"/>
    </location>
    <ligand>
        <name>FMN</name>
        <dbReference type="ChEBI" id="CHEBI:58210"/>
    </ligand>
</feature>
<feature type="binding site" evidence="1">
    <location>
        <begin position="293"/>
        <end position="297"/>
    </location>
    <ligand>
        <name>FMN</name>
        <dbReference type="ChEBI" id="CHEBI:58210"/>
    </ligand>
</feature>
<feature type="binding site" evidence="1">
    <location>
        <position position="319"/>
    </location>
    <ligand>
        <name>FMN</name>
        <dbReference type="ChEBI" id="CHEBI:58210"/>
    </ligand>
</feature>
<accession>Q2P0T3</accession>
<organism>
    <name type="scientific">Xanthomonas oryzae pv. oryzae (strain MAFF 311018)</name>
    <dbReference type="NCBI Taxonomy" id="342109"/>
    <lineage>
        <taxon>Bacteria</taxon>
        <taxon>Pseudomonadati</taxon>
        <taxon>Pseudomonadota</taxon>
        <taxon>Gammaproteobacteria</taxon>
        <taxon>Lysobacterales</taxon>
        <taxon>Lysobacteraceae</taxon>
        <taxon>Xanthomonas</taxon>
    </lineage>
</organism>
<evidence type="ECO:0000255" key="1">
    <source>
        <dbReference type="HAMAP-Rule" id="MF_00300"/>
    </source>
</evidence>
<evidence type="ECO:0000256" key="2">
    <source>
        <dbReference type="SAM" id="MobiDB-lite"/>
    </source>
</evidence>
<reference key="1">
    <citation type="journal article" date="2005" name="Jpn. Agric. Res. Q.">
        <title>Genome sequence of Xanthomonas oryzae pv. oryzae suggests contribution of large numbers of effector genes and insertion sequences to its race diversity.</title>
        <authorList>
            <person name="Ochiai H."/>
            <person name="Inoue Y."/>
            <person name="Takeya M."/>
            <person name="Sasaki A."/>
            <person name="Kaku H."/>
        </authorList>
    </citation>
    <scope>NUCLEOTIDE SEQUENCE [LARGE SCALE GENOMIC DNA]</scope>
    <source>
        <strain>MAFF 311018</strain>
    </source>
</reference>
<keyword id="KW-0028">Amino-acid biosynthesis</keyword>
<keyword id="KW-0057">Aromatic amino acid biosynthesis</keyword>
<keyword id="KW-0274">FAD</keyword>
<keyword id="KW-0285">Flavoprotein</keyword>
<keyword id="KW-0288">FMN</keyword>
<keyword id="KW-0456">Lyase</keyword>
<keyword id="KW-0521">NADP</keyword>
<comment type="function">
    <text evidence="1">Catalyzes the anti-1,4-elimination of the C-3 phosphate and the C-6 proR hydrogen from 5-enolpyruvylshikimate-3-phosphate (EPSP) to yield chorismate, which is the branch point compound that serves as the starting substrate for the three terminal pathways of aromatic amino acid biosynthesis. This reaction introduces a second double bond into the aromatic ring system.</text>
</comment>
<comment type="catalytic activity">
    <reaction evidence="1">
        <text>5-O-(1-carboxyvinyl)-3-phosphoshikimate = chorismate + phosphate</text>
        <dbReference type="Rhea" id="RHEA:21020"/>
        <dbReference type="ChEBI" id="CHEBI:29748"/>
        <dbReference type="ChEBI" id="CHEBI:43474"/>
        <dbReference type="ChEBI" id="CHEBI:57701"/>
        <dbReference type="EC" id="4.2.3.5"/>
    </reaction>
</comment>
<comment type="cofactor">
    <cofactor evidence="1">
        <name>FMNH2</name>
        <dbReference type="ChEBI" id="CHEBI:57618"/>
    </cofactor>
    <text evidence="1">Reduced FMN (FMNH(2)).</text>
</comment>
<comment type="pathway">
    <text evidence="1">Metabolic intermediate biosynthesis; chorismate biosynthesis; chorismate from D-erythrose 4-phosphate and phosphoenolpyruvate: step 7/7.</text>
</comment>
<comment type="subunit">
    <text evidence="1">Homotetramer.</text>
</comment>
<comment type="similarity">
    <text evidence="1">Belongs to the chorismate synthase family.</text>
</comment>
<name>AROC_XANOM</name>
<dbReference type="EC" id="4.2.3.5" evidence="1"/>
<dbReference type="EMBL" id="AP008229">
    <property type="protein sequence ID" value="BAE69844.1"/>
    <property type="molecule type" value="Genomic_DNA"/>
</dbReference>
<dbReference type="RefSeq" id="WP_011259771.1">
    <property type="nucleotide sequence ID" value="NC_007705.1"/>
</dbReference>
<dbReference type="SMR" id="Q2P0T3"/>
<dbReference type="KEGG" id="xom:XOO3089"/>
<dbReference type="HOGENOM" id="CLU_034547_0_2_6"/>
<dbReference type="UniPathway" id="UPA00053">
    <property type="reaction ID" value="UER00090"/>
</dbReference>
<dbReference type="GO" id="GO:0005829">
    <property type="term" value="C:cytosol"/>
    <property type="evidence" value="ECO:0007669"/>
    <property type="project" value="TreeGrafter"/>
</dbReference>
<dbReference type="GO" id="GO:0004107">
    <property type="term" value="F:chorismate synthase activity"/>
    <property type="evidence" value="ECO:0007669"/>
    <property type="project" value="UniProtKB-UniRule"/>
</dbReference>
<dbReference type="GO" id="GO:0010181">
    <property type="term" value="F:FMN binding"/>
    <property type="evidence" value="ECO:0007669"/>
    <property type="project" value="TreeGrafter"/>
</dbReference>
<dbReference type="GO" id="GO:0008652">
    <property type="term" value="P:amino acid biosynthetic process"/>
    <property type="evidence" value="ECO:0007669"/>
    <property type="project" value="UniProtKB-KW"/>
</dbReference>
<dbReference type="GO" id="GO:0009073">
    <property type="term" value="P:aromatic amino acid family biosynthetic process"/>
    <property type="evidence" value="ECO:0007669"/>
    <property type="project" value="UniProtKB-KW"/>
</dbReference>
<dbReference type="GO" id="GO:0009423">
    <property type="term" value="P:chorismate biosynthetic process"/>
    <property type="evidence" value="ECO:0007669"/>
    <property type="project" value="UniProtKB-UniRule"/>
</dbReference>
<dbReference type="CDD" id="cd07304">
    <property type="entry name" value="Chorismate_synthase"/>
    <property type="match status" value="1"/>
</dbReference>
<dbReference type="FunFam" id="3.60.150.10:FF:000001">
    <property type="entry name" value="Chorismate synthase"/>
    <property type="match status" value="1"/>
</dbReference>
<dbReference type="Gene3D" id="3.60.150.10">
    <property type="entry name" value="Chorismate synthase AroC"/>
    <property type="match status" value="1"/>
</dbReference>
<dbReference type="HAMAP" id="MF_00300">
    <property type="entry name" value="Chorismate_synth"/>
    <property type="match status" value="1"/>
</dbReference>
<dbReference type="InterPro" id="IPR000453">
    <property type="entry name" value="Chorismate_synth"/>
</dbReference>
<dbReference type="InterPro" id="IPR035904">
    <property type="entry name" value="Chorismate_synth_AroC_sf"/>
</dbReference>
<dbReference type="InterPro" id="IPR020541">
    <property type="entry name" value="Chorismate_synthase_CS"/>
</dbReference>
<dbReference type="NCBIfam" id="TIGR00033">
    <property type="entry name" value="aroC"/>
    <property type="match status" value="1"/>
</dbReference>
<dbReference type="NCBIfam" id="NF003793">
    <property type="entry name" value="PRK05382.1"/>
    <property type="match status" value="1"/>
</dbReference>
<dbReference type="PANTHER" id="PTHR21085">
    <property type="entry name" value="CHORISMATE SYNTHASE"/>
    <property type="match status" value="1"/>
</dbReference>
<dbReference type="PANTHER" id="PTHR21085:SF0">
    <property type="entry name" value="CHORISMATE SYNTHASE"/>
    <property type="match status" value="1"/>
</dbReference>
<dbReference type="Pfam" id="PF01264">
    <property type="entry name" value="Chorismate_synt"/>
    <property type="match status" value="1"/>
</dbReference>
<dbReference type="PIRSF" id="PIRSF001456">
    <property type="entry name" value="Chorismate_synth"/>
    <property type="match status" value="1"/>
</dbReference>
<dbReference type="SUPFAM" id="SSF103263">
    <property type="entry name" value="Chorismate synthase, AroC"/>
    <property type="match status" value="1"/>
</dbReference>
<dbReference type="PROSITE" id="PS00787">
    <property type="entry name" value="CHORISMATE_SYNTHASE_1"/>
    <property type="match status" value="1"/>
</dbReference>
<dbReference type="PROSITE" id="PS00788">
    <property type="entry name" value="CHORISMATE_SYNTHASE_2"/>
    <property type="match status" value="1"/>
</dbReference>
<dbReference type="PROSITE" id="PS00789">
    <property type="entry name" value="CHORISMATE_SYNTHASE_3"/>
    <property type="match status" value="1"/>
</dbReference>
<sequence>MSANAFGKLFTVTTFGESHGPAIGCVVDGCPPGLEIAPEEFSHDLQRRASGKSRHTSARREADEIEILSGVYEGRTTGTPIGLLIRNTDQRSKDYSNIAQQFRPGHADYTYWQKYGIRDPRGGGRSSARETTMRVAAGVIAKKWLKQRYGVLVRGFLSQLGEIRPAGFDWDAVEDNPFFWPHAAQVPELETYMDALRKSGDSVGARVDVLAGGVPAGWGEPIYGKLDAELAAALMSINAVKGVEIGDGFASAAQKGTEHRDLITPEGFRSNHAGGILGGISTGQAVTASMVLKPTSSLRLPGATVDADGSVVDVITTGRHDPCVGIRATPIAEAMMALVLMDQALRHRAQCGDVGEISPRIPGQVDV</sequence>
<gene>
    <name evidence="1" type="primary">aroC</name>
    <name type="ordered locus">XOO3089</name>
</gene>